<keyword id="KW-0028">Amino-acid biosynthesis</keyword>
<keyword id="KW-0067">ATP-binding</keyword>
<keyword id="KW-0963">Cytoplasm</keyword>
<keyword id="KW-0368">Histidine biosynthesis</keyword>
<keyword id="KW-0378">Hydrolase</keyword>
<keyword id="KW-0547">Nucleotide-binding</keyword>
<comment type="catalytic activity">
    <reaction evidence="1">
        <text>1-(5-phospho-beta-D-ribosyl)-ATP + H2O = 1-(5-phospho-beta-D-ribosyl)-5'-AMP + diphosphate + H(+)</text>
        <dbReference type="Rhea" id="RHEA:22828"/>
        <dbReference type="ChEBI" id="CHEBI:15377"/>
        <dbReference type="ChEBI" id="CHEBI:15378"/>
        <dbReference type="ChEBI" id="CHEBI:33019"/>
        <dbReference type="ChEBI" id="CHEBI:59457"/>
        <dbReference type="ChEBI" id="CHEBI:73183"/>
        <dbReference type="EC" id="3.6.1.31"/>
    </reaction>
</comment>
<comment type="pathway">
    <text evidence="1">Amino-acid biosynthesis; L-histidine biosynthesis; L-histidine from 5-phospho-alpha-D-ribose 1-diphosphate: step 2/9.</text>
</comment>
<comment type="subcellular location">
    <subcellularLocation>
        <location evidence="1">Cytoplasm</location>
    </subcellularLocation>
</comment>
<comment type="similarity">
    <text evidence="1">Belongs to the PRA-PH family.</text>
</comment>
<gene>
    <name evidence="1" type="primary">hisE</name>
    <name type="ordered locus">Mevan_1066</name>
</gene>
<proteinExistence type="inferred from homology"/>
<sequence>MDALKEVYSTIEKRIKEKPEGSYVVKLTTNDKKTAVNKICEKIGEEAAETILAAKDNDKSEIIYESADLIFHTFVLLAKFGISYEELNEEFKKRMK</sequence>
<name>HIS2_METVS</name>
<reference key="1">
    <citation type="submission" date="2007-06" db="EMBL/GenBank/DDBJ databases">
        <title>Complete sequence of Methanococcus vannielii SB.</title>
        <authorList>
            <consortium name="US DOE Joint Genome Institute"/>
            <person name="Copeland A."/>
            <person name="Lucas S."/>
            <person name="Lapidus A."/>
            <person name="Barry K."/>
            <person name="Glavina del Rio T."/>
            <person name="Dalin E."/>
            <person name="Tice H."/>
            <person name="Pitluck S."/>
            <person name="Chain P."/>
            <person name="Malfatti S."/>
            <person name="Shin M."/>
            <person name="Vergez L."/>
            <person name="Schmutz J."/>
            <person name="Larimer F."/>
            <person name="Land M."/>
            <person name="Hauser L."/>
            <person name="Kyrpides N."/>
            <person name="Anderson I."/>
            <person name="Sieprawska-Lupa M."/>
            <person name="Whitman W.B."/>
            <person name="Richardson P."/>
        </authorList>
    </citation>
    <scope>NUCLEOTIDE SEQUENCE [LARGE SCALE GENOMIC DNA]</scope>
    <source>
        <strain>ATCC 35089 / DSM 1224 / JCM 13029 / OCM 148 / SB</strain>
    </source>
</reference>
<feature type="chain" id="PRO_1000063353" description="Phosphoribosyl-ATP pyrophosphatase">
    <location>
        <begin position="1"/>
        <end position="96"/>
    </location>
</feature>
<evidence type="ECO:0000255" key="1">
    <source>
        <dbReference type="HAMAP-Rule" id="MF_01020"/>
    </source>
</evidence>
<organism>
    <name type="scientific">Methanococcus vannielii (strain ATCC 35089 / DSM 1224 / JCM 13029 / OCM 148 / SB)</name>
    <dbReference type="NCBI Taxonomy" id="406327"/>
    <lineage>
        <taxon>Archaea</taxon>
        <taxon>Methanobacteriati</taxon>
        <taxon>Methanobacteriota</taxon>
        <taxon>Methanomada group</taxon>
        <taxon>Methanococci</taxon>
        <taxon>Methanococcales</taxon>
        <taxon>Methanococcaceae</taxon>
        <taxon>Methanococcus</taxon>
    </lineage>
</organism>
<accession>A6UR44</accession>
<dbReference type="EC" id="3.6.1.31" evidence="1"/>
<dbReference type="EMBL" id="CP000742">
    <property type="protein sequence ID" value="ABR54966.1"/>
    <property type="molecule type" value="Genomic_DNA"/>
</dbReference>
<dbReference type="RefSeq" id="WP_012065881.1">
    <property type="nucleotide sequence ID" value="NC_009634.1"/>
</dbReference>
<dbReference type="SMR" id="A6UR44"/>
<dbReference type="STRING" id="406327.Mevan_1066"/>
<dbReference type="GeneID" id="5325382"/>
<dbReference type="KEGG" id="mvn:Mevan_1066"/>
<dbReference type="eggNOG" id="arCOG02677">
    <property type="taxonomic scope" value="Archaea"/>
</dbReference>
<dbReference type="HOGENOM" id="CLU_123337_0_1_2"/>
<dbReference type="OrthoDB" id="39686at2157"/>
<dbReference type="UniPathway" id="UPA00031">
    <property type="reaction ID" value="UER00007"/>
</dbReference>
<dbReference type="Proteomes" id="UP000001107">
    <property type="component" value="Chromosome"/>
</dbReference>
<dbReference type="GO" id="GO:0005737">
    <property type="term" value="C:cytoplasm"/>
    <property type="evidence" value="ECO:0007669"/>
    <property type="project" value="UniProtKB-SubCell"/>
</dbReference>
<dbReference type="GO" id="GO:0005524">
    <property type="term" value="F:ATP binding"/>
    <property type="evidence" value="ECO:0007669"/>
    <property type="project" value="UniProtKB-KW"/>
</dbReference>
<dbReference type="GO" id="GO:0004636">
    <property type="term" value="F:phosphoribosyl-ATP diphosphatase activity"/>
    <property type="evidence" value="ECO:0007669"/>
    <property type="project" value="UniProtKB-UniRule"/>
</dbReference>
<dbReference type="GO" id="GO:0000105">
    <property type="term" value="P:L-histidine biosynthetic process"/>
    <property type="evidence" value="ECO:0007669"/>
    <property type="project" value="UniProtKB-UniRule"/>
</dbReference>
<dbReference type="CDD" id="cd11534">
    <property type="entry name" value="NTP-PPase_HisIE_like"/>
    <property type="match status" value="1"/>
</dbReference>
<dbReference type="Gene3D" id="1.10.287.1080">
    <property type="entry name" value="MazG-like"/>
    <property type="match status" value="1"/>
</dbReference>
<dbReference type="HAMAP" id="MF_01020">
    <property type="entry name" value="HisE"/>
    <property type="match status" value="1"/>
</dbReference>
<dbReference type="InterPro" id="IPR008179">
    <property type="entry name" value="HisE"/>
</dbReference>
<dbReference type="InterPro" id="IPR021130">
    <property type="entry name" value="PRib-ATP_PPHydrolase-like"/>
</dbReference>
<dbReference type="NCBIfam" id="TIGR03188">
    <property type="entry name" value="histidine_hisI"/>
    <property type="match status" value="1"/>
</dbReference>
<dbReference type="PANTHER" id="PTHR42945">
    <property type="entry name" value="HISTIDINE BIOSYNTHESIS BIFUNCTIONAL PROTEIN"/>
    <property type="match status" value="1"/>
</dbReference>
<dbReference type="PANTHER" id="PTHR42945:SF1">
    <property type="entry name" value="HISTIDINE BIOSYNTHESIS BIFUNCTIONAL PROTEIN HIS7"/>
    <property type="match status" value="1"/>
</dbReference>
<dbReference type="Pfam" id="PF01503">
    <property type="entry name" value="PRA-PH"/>
    <property type="match status" value="1"/>
</dbReference>
<dbReference type="SUPFAM" id="SSF101386">
    <property type="entry name" value="all-alpha NTP pyrophosphatases"/>
    <property type="match status" value="1"/>
</dbReference>
<protein>
    <recommendedName>
        <fullName evidence="1">Phosphoribosyl-ATP pyrophosphatase</fullName>
        <shortName evidence="1">PRA-PH</shortName>
        <ecNumber evidence="1">3.6.1.31</ecNumber>
    </recommendedName>
</protein>